<organism>
    <name type="scientific">Escherichia coli O7:K1 (strain IAI39 / ExPEC)</name>
    <dbReference type="NCBI Taxonomy" id="585057"/>
    <lineage>
        <taxon>Bacteria</taxon>
        <taxon>Pseudomonadati</taxon>
        <taxon>Pseudomonadota</taxon>
        <taxon>Gammaproteobacteria</taxon>
        <taxon>Enterobacterales</taxon>
        <taxon>Enterobacteriaceae</taxon>
        <taxon>Escherichia</taxon>
    </lineage>
</organism>
<keyword id="KW-0627">Porphyrin biosynthesis</keyword>
<keyword id="KW-0808">Transferase</keyword>
<accession>B7NTE0</accession>
<name>HEM3_ECO7I</name>
<protein>
    <recommendedName>
        <fullName evidence="1">Porphobilinogen deaminase</fullName>
        <shortName evidence="1">PBG</shortName>
        <ecNumber evidence="1">2.5.1.61</ecNumber>
    </recommendedName>
    <alternativeName>
        <fullName evidence="1">Hydroxymethylbilane synthase</fullName>
        <shortName evidence="1">HMBS</shortName>
    </alternativeName>
    <alternativeName>
        <fullName evidence="1">Pre-uroporphyrinogen synthase</fullName>
    </alternativeName>
</protein>
<reference key="1">
    <citation type="journal article" date="2009" name="PLoS Genet.">
        <title>Organised genome dynamics in the Escherichia coli species results in highly diverse adaptive paths.</title>
        <authorList>
            <person name="Touchon M."/>
            <person name="Hoede C."/>
            <person name="Tenaillon O."/>
            <person name="Barbe V."/>
            <person name="Baeriswyl S."/>
            <person name="Bidet P."/>
            <person name="Bingen E."/>
            <person name="Bonacorsi S."/>
            <person name="Bouchier C."/>
            <person name="Bouvet O."/>
            <person name="Calteau A."/>
            <person name="Chiapello H."/>
            <person name="Clermont O."/>
            <person name="Cruveiller S."/>
            <person name="Danchin A."/>
            <person name="Diard M."/>
            <person name="Dossat C."/>
            <person name="Karoui M.E."/>
            <person name="Frapy E."/>
            <person name="Garry L."/>
            <person name="Ghigo J.M."/>
            <person name="Gilles A.M."/>
            <person name="Johnson J."/>
            <person name="Le Bouguenec C."/>
            <person name="Lescat M."/>
            <person name="Mangenot S."/>
            <person name="Martinez-Jehanne V."/>
            <person name="Matic I."/>
            <person name="Nassif X."/>
            <person name="Oztas S."/>
            <person name="Petit M.A."/>
            <person name="Pichon C."/>
            <person name="Rouy Z."/>
            <person name="Ruf C.S."/>
            <person name="Schneider D."/>
            <person name="Tourret J."/>
            <person name="Vacherie B."/>
            <person name="Vallenet D."/>
            <person name="Medigue C."/>
            <person name="Rocha E.P.C."/>
            <person name="Denamur E."/>
        </authorList>
    </citation>
    <scope>NUCLEOTIDE SEQUENCE [LARGE SCALE GENOMIC DNA]</scope>
    <source>
        <strain>IAI39 / ExPEC</strain>
    </source>
</reference>
<comment type="function">
    <text evidence="1">Tetrapolymerization of the monopyrrole PBG into the hydroxymethylbilane pre-uroporphyrinogen in several discrete steps.</text>
</comment>
<comment type="catalytic activity">
    <reaction evidence="1">
        <text>4 porphobilinogen + H2O = hydroxymethylbilane + 4 NH4(+)</text>
        <dbReference type="Rhea" id="RHEA:13185"/>
        <dbReference type="ChEBI" id="CHEBI:15377"/>
        <dbReference type="ChEBI" id="CHEBI:28938"/>
        <dbReference type="ChEBI" id="CHEBI:57845"/>
        <dbReference type="ChEBI" id="CHEBI:58126"/>
        <dbReference type="EC" id="2.5.1.61"/>
    </reaction>
</comment>
<comment type="cofactor">
    <cofactor evidence="1">
        <name>dipyrromethane</name>
        <dbReference type="ChEBI" id="CHEBI:60342"/>
    </cofactor>
    <text evidence="1">Binds 1 dipyrromethane group covalently.</text>
</comment>
<comment type="pathway">
    <text evidence="1">Porphyrin-containing compound metabolism; protoporphyrin-IX biosynthesis; coproporphyrinogen-III from 5-aminolevulinate: step 2/4.</text>
</comment>
<comment type="subunit">
    <text evidence="1">Monomer.</text>
</comment>
<comment type="miscellaneous">
    <text evidence="1">The porphobilinogen subunits are added to the dipyrromethane group.</text>
</comment>
<comment type="similarity">
    <text evidence="1">Belongs to the HMBS family.</text>
</comment>
<proteinExistence type="inferred from homology"/>
<feature type="chain" id="PRO_1000119215" description="Porphobilinogen deaminase">
    <location>
        <begin position="1"/>
        <end position="313"/>
    </location>
</feature>
<feature type="modified residue" description="S-(dipyrrolylmethanemethyl)cysteine" evidence="1">
    <location>
        <position position="242"/>
    </location>
</feature>
<sequence length="313" mass="33893">MLDNVLRIATRQSPLALWQAHYVKDKLMASHPGLVVELVPMVTRGDVILDTPLAKVGGKGLFVKELEVALLENRADIAVHSMKDVPVEFPQGLGLVTICEREDPRDAFVSNNYDNLDALPAGSIVGTSSLRRQCQLAERRPDLIIRSLRGNVGTRLSKLDNGEYDAIILAVAGLKRLGLESRIRAALPPEISLPAVGQGAVGIECRLDDTRTRELLAALNHHETALRVTAERAMNTRLEGGCQVPIGSYAELIDGEIWLRALVGAPDGSQIIRGERRGAPQDAEQMGISLAEELLNNGAREILAEVYNGDAPA</sequence>
<dbReference type="EC" id="2.5.1.61" evidence="1"/>
<dbReference type="EMBL" id="CU928164">
    <property type="protein sequence ID" value="CAR19104.1"/>
    <property type="molecule type" value="Genomic_DNA"/>
</dbReference>
<dbReference type="RefSeq" id="WP_012602475.1">
    <property type="nucleotide sequence ID" value="NC_011750.1"/>
</dbReference>
<dbReference type="RefSeq" id="YP_002408913.1">
    <property type="nucleotide sequence ID" value="NC_011750.1"/>
</dbReference>
<dbReference type="SMR" id="B7NTE0"/>
<dbReference type="STRING" id="585057.ECIAI39_2985"/>
<dbReference type="KEGG" id="ect:ECIAI39_2985"/>
<dbReference type="PATRIC" id="fig|585057.6.peg.3097"/>
<dbReference type="HOGENOM" id="CLU_019704_0_2_6"/>
<dbReference type="UniPathway" id="UPA00251">
    <property type="reaction ID" value="UER00319"/>
</dbReference>
<dbReference type="Proteomes" id="UP000000749">
    <property type="component" value="Chromosome"/>
</dbReference>
<dbReference type="GO" id="GO:0005737">
    <property type="term" value="C:cytoplasm"/>
    <property type="evidence" value="ECO:0007669"/>
    <property type="project" value="TreeGrafter"/>
</dbReference>
<dbReference type="GO" id="GO:0004418">
    <property type="term" value="F:hydroxymethylbilane synthase activity"/>
    <property type="evidence" value="ECO:0007669"/>
    <property type="project" value="UniProtKB-UniRule"/>
</dbReference>
<dbReference type="GO" id="GO:0006782">
    <property type="term" value="P:protoporphyrinogen IX biosynthetic process"/>
    <property type="evidence" value="ECO:0007669"/>
    <property type="project" value="UniProtKB-UniRule"/>
</dbReference>
<dbReference type="CDD" id="cd13646">
    <property type="entry name" value="PBP2_EcHMBS_like"/>
    <property type="match status" value="1"/>
</dbReference>
<dbReference type="FunFam" id="3.30.160.40:FF:000002">
    <property type="entry name" value="Porphobilinogen deaminase"/>
    <property type="match status" value="1"/>
</dbReference>
<dbReference type="FunFam" id="3.40.190.10:FF:000004">
    <property type="entry name" value="Porphobilinogen deaminase"/>
    <property type="match status" value="1"/>
</dbReference>
<dbReference type="FunFam" id="3.40.190.10:FF:000005">
    <property type="entry name" value="Porphobilinogen deaminase"/>
    <property type="match status" value="1"/>
</dbReference>
<dbReference type="Gene3D" id="3.40.190.10">
    <property type="entry name" value="Periplasmic binding protein-like II"/>
    <property type="match status" value="2"/>
</dbReference>
<dbReference type="Gene3D" id="3.30.160.40">
    <property type="entry name" value="Porphobilinogen deaminase, C-terminal domain"/>
    <property type="match status" value="1"/>
</dbReference>
<dbReference type="HAMAP" id="MF_00260">
    <property type="entry name" value="Porphobil_deam"/>
    <property type="match status" value="1"/>
</dbReference>
<dbReference type="InterPro" id="IPR000860">
    <property type="entry name" value="HemC"/>
</dbReference>
<dbReference type="InterPro" id="IPR022419">
    <property type="entry name" value="Porphobilin_deaminase_cofac_BS"/>
</dbReference>
<dbReference type="InterPro" id="IPR022417">
    <property type="entry name" value="Porphobilin_deaminase_N"/>
</dbReference>
<dbReference type="InterPro" id="IPR022418">
    <property type="entry name" value="Porphobilinogen_deaminase_C"/>
</dbReference>
<dbReference type="InterPro" id="IPR036803">
    <property type="entry name" value="Porphobilinogen_deaminase_C_sf"/>
</dbReference>
<dbReference type="NCBIfam" id="TIGR00212">
    <property type="entry name" value="hemC"/>
    <property type="match status" value="1"/>
</dbReference>
<dbReference type="PANTHER" id="PTHR11557">
    <property type="entry name" value="PORPHOBILINOGEN DEAMINASE"/>
    <property type="match status" value="1"/>
</dbReference>
<dbReference type="PANTHER" id="PTHR11557:SF0">
    <property type="entry name" value="PORPHOBILINOGEN DEAMINASE"/>
    <property type="match status" value="1"/>
</dbReference>
<dbReference type="Pfam" id="PF01379">
    <property type="entry name" value="Porphobil_deam"/>
    <property type="match status" value="1"/>
</dbReference>
<dbReference type="Pfam" id="PF03900">
    <property type="entry name" value="Porphobil_deamC"/>
    <property type="match status" value="1"/>
</dbReference>
<dbReference type="PIRSF" id="PIRSF001438">
    <property type="entry name" value="4pyrrol_synth_OHMeBilane_synth"/>
    <property type="match status" value="1"/>
</dbReference>
<dbReference type="PRINTS" id="PR00151">
    <property type="entry name" value="PORPHBDMNASE"/>
</dbReference>
<dbReference type="SUPFAM" id="SSF53850">
    <property type="entry name" value="Periplasmic binding protein-like II"/>
    <property type="match status" value="1"/>
</dbReference>
<dbReference type="SUPFAM" id="SSF54782">
    <property type="entry name" value="Porphobilinogen deaminase (hydroxymethylbilane synthase), C-terminal domain"/>
    <property type="match status" value="1"/>
</dbReference>
<dbReference type="PROSITE" id="PS00533">
    <property type="entry name" value="PORPHOBILINOGEN_DEAM"/>
    <property type="match status" value="1"/>
</dbReference>
<gene>
    <name evidence="1" type="primary">hemC</name>
    <name type="ordered locus">ECIAI39_2985</name>
</gene>
<evidence type="ECO:0000255" key="1">
    <source>
        <dbReference type="HAMAP-Rule" id="MF_00260"/>
    </source>
</evidence>